<keyword id="KW-0002">3D-structure</keyword>
<keyword id="KW-0903">Direct protein sequencing</keyword>
<keyword id="KW-1015">Disulfide bond</keyword>
<keyword id="KW-0872">Ion channel impairing toxin</keyword>
<keyword id="KW-0960">Knottin</keyword>
<keyword id="KW-0528">Neurotoxin</keyword>
<keyword id="KW-0964">Secreted</keyword>
<keyword id="KW-0800">Toxin</keyword>
<keyword id="KW-0738">Voltage-gated sodium channel impairing toxin</keyword>
<feature type="chain" id="PRO_0000087679" description="Mu-hexatoxin-Mg2a" evidence="1">
    <location>
        <begin position="1"/>
        <end position="46"/>
    </location>
</feature>
<feature type="disulfide bond" evidence="2 7">
    <location>
        <begin position="3"/>
        <end position="18"/>
    </location>
</feature>
<feature type="disulfide bond" evidence="2 7">
    <location>
        <begin position="10"/>
        <end position="24"/>
    </location>
</feature>
<feature type="disulfide bond" evidence="2 7">
    <location>
        <begin position="17"/>
        <end position="36"/>
    </location>
</feature>
<feature type="disulfide bond" evidence="2 7">
    <location>
        <begin position="21"/>
        <end position="43"/>
    </location>
</feature>
<feature type="disulfide bond" evidence="2 7">
    <location>
        <begin position="26"/>
        <end position="34"/>
    </location>
</feature>
<feature type="strand" evidence="8">
    <location>
        <begin position="17"/>
        <end position="19"/>
    </location>
</feature>
<feature type="strand" evidence="8">
    <location>
        <begin position="22"/>
        <end position="25"/>
    </location>
</feature>
<feature type="strand" evidence="8">
    <location>
        <begin position="27"/>
        <end position="30"/>
    </location>
</feature>
<feature type="strand" evidence="8">
    <location>
        <begin position="35"/>
        <end position="39"/>
    </location>
</feature>
<name>TX22A_MACGS</name>
<organism>
    <name type="scientific">Macrothele gigas</name>
    <name type="common">Japanese funnel web spider</name>
    <dbReference type="NCBI Taxonomy" id="223896"/>
    <lineage>
        <taxon>Eukaryota</taxon>
        <taxon>Metazoa</taxon>
        <taxon>Ecdysozoa</taxon>
        <taxon>Arthropoda</taxon>
        <taxon>Chelicerata</taxon>
        <taxon>Arachnida</taxon>
        <taxon>Araneae</taxon>
        <taxon>Mygalomorphae</taxon>
        <taxon>Macrothelidae</taxon>
        <taxon>Macrothele</taxon>
    </lineage>
</organism>
<protein>
    <recommendedName>
        <fullName evidence="5">Mu-hexatoxin-Mg2a</fullName>
        <shortName evidence="5">Mu-HXTX-Mg2a</shortName>
    </recommendedName>
    <alternativeName>
        <fullName evidence="3 4">Neurotoxin magi-3</fullName>
    </alternativeName>
</protein>
<evidence type="ECO:0000269" key="1">
    <source>
    </source>
</evidence>
<evidence type="ECO:0000269" key="2">
    <source>
    </source>
</evidence>
<evidence type="ECO:0000303" key="3">
    <source>
    </source>
</evidence>
<evidence type="ECO:0000303" key="4">
    <source>
    </source>
</evidence>
<evidence type="ECO:0000305" key="5"/>
<evidence type="ECO:0000305" key="6">
    <source>
    </source>
</evidence>
<evidence type="ECO:0007744" key="7">
    <source>
        <dbReference type="PDB" id="6AX2"/>
    </source>
</evidence>
<evidence type="ECO:0007829" key="8">
    <source>
        <dbReference type="PDB" id="6AX2"/>
    </source>
</evidence>
<reference key="1">
    <citation type="journal article" date="2003" name="FEBS Lett.">
        <title>Distinct primary structures of the major peptide toxins from the venom of the spider Macrothele gigas that bind to sites 3 and 4 in the sodium channel.</title>
        <authorList>
            <person name="Corzo G."/>
            <person name="Gilles N."/>
            <person name="Satake H."/>
            <person name="Villegas E."/>
            <person name="Dai L."/>
            <person name="Nakajima T."/>
            <person name="Haupt J."/>
        </authorList>
    </citation>
    <scope>PROTEIN SEQUENCE</scope>
    <scope>FUNCTION</scope>
    <scope>SUBCELLULAR LOCATION</scope>
    <scope>MASS SPECTROMETRY</scope>
    <scope>DISULFIDE BONDS</scope>
    <source>
        <tissue>Venom</tissue>
    </source>
</reference>
<reference key="2">
    <citation type="journal article" date="2018" name="Protein Sci.">
        <title>Successful refolding and NMR structure of rMagi3: a disulfide-rich insecticidal spider toxin.</title>
        <authorList>
            <person name="Titaux-Delgado G."/>
            <person name="Carrillo E."/>
            <person name="Mendoza A."/>
            <person name="Mayorga-Flores M."/>
            <person name="Escobedo-Gonzalez F.C."/>
            <person name="Cano-Sanchez P."/>
            <person name="Lopez-Vera E."/>
            <person name="Corzo G."/>
            <person name="Del Rio-Portilla F."/>
        </authorList>
    </citation>
    <scope>STRUCTURE BY NMR</scope>
    <scope>DISULFIDE BONDS</scope>
</reference>
<accession>P83559</accession>
<comment type="function">
    <text evidence="1 2">Competes for binding at site 3 of the insect voltage-gated sodium channel (Nav) (PubMed:12860384). Insecticidal neurotoxin (PubMed:12860384, PubMed:29247580). Causes temporary paralysis to lepidopteran larvae (10.3 nmol/g) or to crickets (doses from 0.93 to 119 ug/g) (PubMed:12860384, PubMed:29247580). Is not toxic to mice when injected intracranially (high doses) (PubMed:12860384, PubMed:29247580).</text>
</comment>
<comment type="subcellular location">
    <subcellularLocation>
        <location evidence="1">Secreted</location>
    </subcellularLocation>
</comment>
<comment type="tissue specificity">
    <text evidence="6">Expressed by the venom gland.</text>
</comment>
<comment type="domain">
    <text evidence="2">The presence of a 'disulfide through disulfide knot' structurally defines this protein as a knottin.</text>
</comment>
<comment type="mass spectrometry" mass="5222.8" method="MALDI" evidence="1"/>
<comment type="miscellaneous">
    <text evidence="2">Shows very weak inhibition on rat Nav1.4/SCN4A sodium channels (23% at 50 uM of toxin and 35% at 100 uM).</text>
</comment>
<comment type="similarity">
    <text>Belongs to the neurotoxin 02 (plectoxin) family. 02 (plectoxin) subfamily.</text>
</comment>
<proteinExistence type="evidence at protein level"/>
<sequence length="46" mass="5233">GGCIKWNHSCQTTTLKCCGKCVVCYCHTPWGTNCRCDRTRLFCTED</sequence>
<dbReference type="PDB" id="6AX2">
    <property type="method" value="NMR"/>
    <property type="chains" value="A=1-46"/>
</dbReference>
<dbReference type="PDBsum" id="6AX2"/>
<dbReference type="BMRB" id="P83559"/>
<dbReference type="SMR" id="P83559"/>
<dbReference type="ArachnoServer" id="AS000380">
    <property type="toxin name" value="mu-hexatoxin-Mg2a"/>
</dbReference>
<dbReference type="GO" id="GO:0005576">
    <property type="term" value="C:extracellular region"/>
    <property type="evidence" value="ECO:0007669"/>
    <property type="project" value="UniProtKB-SubCell"/>
</dbReference>
<dbReference type="GO" id="GO:0017080">
    <property type="term" value="F:sodium channel regulator activity"/>
    <property type="evidence" value="ECO:0007669"/>
    <property type="project" value="UniProtKB-KW"/>
</dbReference>
<dbReference type="GO" id="GO:0090729">
    <property type="term" value="F:toxin activity"/>
    <property type="evidence" value="ECO:0007669"/>
    <property type="project" value="UniProtKB-KW"/>
</dbReference>